<gene>
    <name evidence="14" type="primary">IVNS1ABP</name>
    <name type="synonym">ARA3</name>
    <name type="synonym">FLARA3</name>
    <name type="synonym">KIAA0850</name>
    <name evidence="10" type="synonym">KLHL39</name>
    <name type="synonym">NS1</name>
    <name type="synonym">NS1BP</name>
    <name type="ORF">HSPC068</name>
</gene>
<comment type="function">
    <text evidence="1 3 5 6 8">Involved in many cell functions, including pre-mRNA splicing, the aryl hydrocarbon receptor (AHR) pathway, F-actin organization and protein ubiquitination. Plays a role in the dynamic organization of the actin skeleton as a stabilizer of actin filaments by association with F-actin through Kelch repeats (By similarity). Protects cells from cell death induced by actin destabilization (By similarity). Functions as modifier of the AHR/Aryl hydrocarbon receptor pathway increasing the concentration of AHR available to activate transcription (PubMed:16582008). In addition, functions as a negative regulator of BCR(KLHL20) E3 ubiquitin ligase complex to prevent ubiquitin-mediated proteolysis of PML and DAPK1, two tumor suppressors (PubMed:25619834). Inhibits pre-mRNA splicing (in vitro) (PubMed:9696811). May play a role in mRNA nuclear export (PubMed:30538201).</text>
</comment>
<comment type="function">
    <text evidence="4 6 8">(Microbial infection) Involved in the alternative splicing of influenza A virus M1 mRNA through interaction with HNRNPK, thereby facilitating the generation of viral M2 protein (PubMed:23825951, PubMed:9696811). The BTB and Kelch domains are required for splicing activity (PubMed:30538201). Promotes export of viral M mRNA and RNP via its interaction with mRNA export factor ALYREF (PubMed:30538201).</text>
</comment>
<comment type="subunit">
    <text evidence="3 4 5 6">Homodimer; through the BTB domain (PubMed:30538201). Interacts with AHR/Aryl hydrocarbon receptor (PubMed:16582008). Interacts (via BACK domain) with pre-mRNA-binding protein HNRNPK; the interaction is direct (PubMed:23825951, PubMed:30538201). Interacts (via BACK domain) with splicing factor PTBP1; the interaction is direct (PubMed:30538201). Interacts (via Kelch repeats) with RNA polymerase POLR2A (via C-terminal domain) (PubMed:30538201). Interacts (via BACK domain) with splicing factor SNRPA; the interaction is indirect (PubMed:30538201). Interacts (via Kelch repeats) with splicing factor SART1 (PubMed:30538201). Interacts (via BACK domain) with ALYREF; the interaction is indirect and likely plays a role in mRNA nuclear export (PubMed:30538201). Interacts (via Kelch repeats) with KLHL20 (via Kelch repeats); this interaction blocks the assembly of Cul3-KLHL20 complex (PubMed:25619834).</text>
</comment>
<comment type="subunit">
    <text evidence="6 8">(Microbial infection) Interacts (via BACK domain) with influenza A virus non-structural protein 1 (NS1); the interaction is direct and bridges the interaction between NS1 and HNRNPK.</text>
</comment>
<comment type="interaction">
    <interactant intactId="EBI-715774">
        <id>Q9Y6Y0</id>
    </interactant>
    <interactant intactId="EBI-456129">
        <id>Q13618</id>
        <label>CUL3</label>
    </interactant>
    <organismsDiffer>false</organismsDiffer>
    <experiments>2</experiments>
</comment>
<comment type="interaction">
    <interactant intactId="EBI-715774">
        <id>Q9Y6Y0</id>
    </interactant>
    <interactant intactId="EBI-714379">
        <id>Q9Y2M5</id>
        <label>KLHL20</label>
    </interactant>
    <organismsDiffer>false</organismsDiffer>
    <experiments>9</experiments>
</comment>
<comment type="subcellular location">
    <subcellularLocation>
        <location evidence="8">Cytoplasm</location>
    </subcellularLocation>
    <subcellularLocation>
        <location evidence="8">Cytoplasm</location>
        <location evidence="8">Cytoskeleton</location>
    </subcellularLocation>
    <subcellularLocation>
        <location evidence="8">Nucleus</location>
        <location evidence="8">Nucleoplasm</location>
    </subcellularLocation>
    <text evidence="1 8">Associated with actin filaments (By similarity). Localization related to speckle domains which correspond to interchromatin granules and are enriched in factors involved in pre-mRNA splicing (PubMed:9696811). Following influenza A virus infection, redistribution from speckles to a more diffuse distribution in the nucleoplasm (PubMed:9696811).</text>
</comment>
<comment type="domain">
    <text evidence="3 6">When the BTB domain is lacking, AHR signaling induction promoted by IVNS1ABP is massively increased; Thus, the BTB domain inhibits AHR signaling induced by IVNS1ABP (PubMed:16582008). Dimerization is necessary for proper splicing activity of IVNS1ABP and this is mediated by the BTB domain (PubMed:30538201). The BACK domain is necessary for proper viral M mRNA export (PubMed:30538201).</text>
</comment>
<comment type="disease" evidence="7">
    <disease id="DI-05887">
        <name>Immunodeficiency 70</name>
        <acronym>IMD70</acronym>
        <description>A primary immunodeficiency clinically characterized by human papillomavirus-associated warts on the hands, feet and face, recurrent bacterial infections, and autoinflammatory features, such as colitis, celiac disease, and retinal vasculitis. Immunologic workup shows decreased CD4+ T cells, decreased CD19+ B cells, and hypogammaglobulinemia. IMD70 inheritance is autosomal dominant with incomplete penetrance.</description>
        <dbReference type="MIM" id="618969"/>
    </disease>
    <text>The disease may be caused by variants affecting the gene represented in this entry.</text>
</comment>
<comment type="similarity">
    <text evidence="13">Belongs to the BTB-kelch protein family.</text>
</comment>
<comment type="sequence caution" evidence="13">
    <conflict type="frameshift">
        <sequence resource="EMBL-CDS" id="AAF29040"/>
    </conflict>
</comment>
<comment type="sequence caution" evidence="13">
    <conflict type="erroneous initiation">
        <sequence resource="EMBL-CDS" id="BAA74873"/>
    </conflict>
</comment>
<comment type="sequence caution" evidence="13">
    <conflict type="frameshift">
        <sequence resource="EMBL-CDS" id="CAA10029"/>
    </conflict>
</comment>
<name>NS1BP_HUMAN</name>
<protein>
    <recommendedName>
        <fullName>Influenza virus NS1A-binding protein</fullName>
        <shortName>NS1-BP</shortName>
        <shortName evidence="12">NS1-binding protein</shortName>
    </recommendedName>
    <alternativeName>
        <fullName evidence="9">Aryl hydrocarbon receptor-associated protein 3</fullName>
    </alternativeName>
    <alternativeName>
        <fullName evidence="10">Kelch-like protein 39</fullName>
    </alternativeName>
</protein>
<evidence type="ECO:0000250" key="1">
    <source>
        <dbReference type="UniProtKB" id="Q920Q8"/>
    </source>
</evidence>
<evidence type="ECO:0000256" key="2">
    <source>
        <dbReference type="SAM" id="MobiDB-lite"/>
    </source>
</evidence>
<evidence type="ECO:0000269" key="3">
    <source>
    </source>
</evidence>
<evidence type="ECO:0000269" key="4">
    <source>
    </source>
</evidence>
<evidence type="ECO:0000269" key="5">
    <source>
    </source>
</evidence>
<evidence type="ECO:0000269" key="6">
    <source>
    </source>
</evidence>
<evidence type="ECO:0000269" key="7">
    <source>
    </source>
</evidence>
<evidence type="ECO:0000269" key="8">
    <source>
    </source>
</evidence>
<evidence type="ECO:0000303" key="9">
    <source>
    </source>
</evidence>
<evidence type="ECO:0000303" key="10">
    <source>
    </source>
</evidence>
<evidence type="ECO:0000303" key="11">
    <source>
    </source>
</evidence>
<evidence type="ECO:0000303" key="12">
    <source>
    </source>
</evidence>
<evidence type="ECO:0000305" key="13"/>
<evidence type="ECO:0000312" key="14">
    <source>
        <dbReference type="HGNC" id="HGNC:16951"/>
    </source>
</evidence>
<evidence type="ECO:0007744" key="15">
    <source>
        <dbReference type="PDB" id="5YY8"/>
    </source>
</evidence>
<evidence type="ECO:0007744" key="16">
    <source>
        <dbReference type="PDB" id="6N34"/>
    </source>
</evidence>
<evidence type="ECO:0007744" key="17">
    <source>
        <dbReference type="PDB" id="6N3H"/>
    </source>
</evidence>
<evidence type="ECO:0007744" key="18">
    <source>
    </source>
</evidence>
<evidence type="ECO:0007744" key="19">
    <source>
    </source>
</evidence>
<evidence type="ECO:0007744" key="20">
    <source>
    </source>
</evidence>
<evidence type="ECO:0007744" key="21">
    <source>
    </source>
</evidence>
<evidence type="ECO:0007744" key="22">
    <source>
    </source>
</evidence>
<evidence type="ECO:0007829" key="23">
    <source>
        <dbReference type="PDB" id="5YY8"/>
    </source>
</evidence>
<evidence type="ECO:0007829" key="24">
    <source>
        <dbReference type="PDB" id="6N34"/>
    </source>
</evidence>
<evidence type="ECO:0007829" key="25">
    <source>
        <dbReference type="PDB" id="6N3H"/>
    </source>
</evidence>
<accession>Q9Y6Y0</accession>
<accession>A8K8R6</accession>
<accession>Q1G4T6</accession>
<accession>Q1G4T7</accession>
<accession>Q5TF75</accession>
<accession>Q6NW38</accession>
<accession>Q7LCG2</accession>
<accession>Q9NZX0</accession>
<accession>Q9Y480</accession>
<sequence>MIPNGYLMFEDENFIESSVAKLNALRKSGQFCDVRLQVCGHEMLAHRAVLACCSPYLFEIFNSDSDPHGISHVKFDDLNPEAVEVLLNYAYTAQLKADKELVKDVYSAAKKLKMDRVKQVCGDYLLSRMDVTSCISYRNFASCMGDSRLLNKVDAYIQEHLLQISEEEEFLKLPRLKLEVMLEDNVCLPSNGKLYTKVINWVQRSIWENGDSLEELMEEVQTLYYSADHKLLDGNLLDGQAEVFGSDDDHIQFVQKKPPRENGHKQISSSSTGCLSSPNATVQSPKHEWKIVASEKTSNNTYLCLAVLDGIFCVIFLHGRNSPQSSPTSTPKLSKSLSFEMQQDELIEKPMSPMQYARSGLGTAEMNGKLIAAGGYNREECLRTVECYNPHTDHWSFLAPMRTPRARFQMAVLMGQLYVVGGSNGHSDDLSCGEMYDSNIDDWIPVPELRTNRCNAGVCALNGKLYIVGGSDPYGQKGLKNCDVFDPVTKLWTSCAPLNIRRHQSAVCELGGYLYIIGGAESWNCLNTVERYNPENNTWTLIAPMNVARRGAGVAVLNGKLFVCGGFDGSHAISCVEMYDPTRNEWKMMGNMTSPRSNAGIATVGNTIYAVGGFDGNEFLNTVEVYNLESNEWSPYTKIFQF</sequence>
<proteinExistence type="evidence at protein level"/>
<dbReference type="EMBL" id="AJ012449">
    <property type="protein sequence ID" value="CAA10029.1"/>
    <property type="status" value="ALT_FRAME"/>
    <property type="molecule type" value="mRNA"/>
</dbReference>
<dbReference type="EMBL" id="DQ443528">
    <property type="protein sequence ID" value="ABE03889.1"/>
    <property type="molecule type" value="mRNA"/>
</dbReference>
<dbReference type="EMBL" id="DQ443529">
    <property type="protein sequence ID" value="ABE03890.1"/>
    <property type="molecule type" value="mRNA"/>
</dbReference>
<dbReference type="EMBL" id="AF205218">
    <property type="protein sequence ID" value="AAG43485.1"/>
    <property type="molecule type" value="mRNA"/>
</dbReference>
<dbReference type="EMBL" id="AB020657">
    <property type="protein sequence ID" value="BAA74873.2"/>
    <property type="status" value="ALT_INIT"/>
    <property type="molecule type" value="mRNA"/>
</dbReference>
<dbReference type="EMBL" id="AF161553">
    <property type="protein sequence ID" value="AAF29040.1"/>
    <property type="status" value="ALT_FRAME"/>
    <property type="molecule type" value="mRNA"/>
</dbReference>
<dbReference type="EMBL" id="AL078644">
    <property type="status" value="NOT_ANNOTATED_CDS"/>
    <property type="molecule type" value="Genomic_DNA"/>
</dbReference>
<dbReference type="EMBL" id="AL356273">
    <property type="status" value="NOT_ANNOTATED_CDS"/>
    <property type="molecule type" value="Genomic_DNA"/>
</dbReference>
<dbReference type="EMBL" id="AK292431">
    <property type="protein sequence ID" value="BAF85120.1"/>
    <property type="molecule type" value="mRNA"/>
</dbReference>
<dbReference type="EMBL" id="CH471067">
    <property type="protein sequence ID" value="EAW91194.1"/>
    <property type="molecule type" value="Genomic_DNA"/>
</dbReference>
<dbReference type="EMBL" id="BC067739">
    <property type="protein sequence ID" value="AAH67739.1"/>
    <property type="molecule type" value="mRNA"/>
</dbReference>
<dbReference type="CCDS" id="CCDS1368.1"/>
<dbReference type="RefSeq" id="NP_006460.2">
    <property type="nucleotide sequence ID" value="NM_006469.4"/>
</dbReference>
<dbReference type="RefSeq" id="XP_047290026.1">
    <property type="nucleotide sequence ID" value="XM_047434070.1"/>
</dbReference>
<dbReference type="RefSeq" id="XP_054189863.1">
    <property type="nucleotide sequence ID" value="XM_054333888.1"/>
</dbReference>
<dbReference type="PDB" id="5YY8">
    <property type="method" value="X-ray"/>
    <property type="resolution" value="1.98 A"/>
    <property type="chains" value="A=330-642"/>
</dbReference>
<dbReference type="PDB" id="6N34">
    <property type="method" value="X-ray"/>
    <property type="resolution" value="2.80 A"/>
    <property type="chains" value="A/B=1-137"/>
</dbReference>
<dbReference type="PDB" id="6N3H">
    <property type="method" value="X-ray"/>
    <property type="resolution" value="2.60 A"/>
    <property type="chains" value="A/B=321-642"/>
</dbReference>
<dbReference type="PDBsum" id="5YY8"/>
<dbReference type="PDBsum" id="6N34"/>
<dbReference type="PDBsum" id="6N3H"/>
<dbReference type="SMR" id="Q9Y6Y0"/>
<dbReference type="BioGRID" id="115869">
    <property type="interactions" value="171"/>
</dbReference>
<dbReference type="FunCoup" id="Q9Y6Y0">
    <property type="interactions" value="1364"/>
</dbReference>
<dbReference type="IntAct" id="Q9Y6Y0">
    <property type="interactions" value="64"/>
</dbReference>
<dbReference type="STRING" id="9606.ENSP00000356468"/>
<dbReference type="GlyGen" id="Q9Y6Y0">
    <property type="glycosylation" value="2 sites, 1 O-linked glycan (1 site)"/>
</dbReference>
<dbReference type="iPTMnet" id="Q9Y6Y0"/>
<dbReference type="PhosphoSitePlus" id="Q9Y6Y0"/>
<dbReference type="BioMuta" id="IVNS1ABP"/>
<dbReference type="DMDM" id="146325015"/>
<dbReference type="jPOST" id="Q9Y6Y0"/>
<dbReference type="MassIVE" id="Q9Y6Y0"/>
<dbReference type="PaxDb" id="9606-ENSP00000356468"/>
<dbReference type="PeptideAtlas" id="Q9Y6Y0"/>
<dbReference type="ProteomicsDB" id="86824"/>
<dbReference type="Pumba" id="Q9Y6Y0"/>
<dbReference type="Antibodypedia" id="1274">
    <property type="antibodies" value="122 antibodies from 26 providers"/>
</dbReference>
<dbReference type="DNASU" id="10625"/>
<dbReference type="Ensembl" id="ENST00000367498.8">
    <property type="protein sequence ID" value="ENSP00000356468.3"/>
    <property type="gene ID" value="ENSG00000116679.17"/>
</dbReference>
<dbReference type="Ensembl" id="ENST00000718429.1">
    <property type="protein sequence ID" value="ENSP00000520813.1"/>
    <property type="gene ID" value="ENSG00000116679.17"/>
</dbReference>
<dbReference type="GeneID" id="10625"/>
<dbReference type="KEGG" id="hsa:10625"/>
<dbReference type="MANE-Select" id="ENST00000367498.8">
    <property type="protein sequence ID" value="ENSP00000356468.3"/>
    <property type="RefSeq nucleotide sequence ID" value="NM_006469.5"/>
    <property type="RefSeq protein sequence ID" value="NP_006460.2"/>
</dbReference>
<dbReference type="UCSC" id="uc001grl.4">
    <property type="organism name" value="human"/>
</dbReference>
<dbReference type="AGR" id="HGNC:16951"/>
<dbReference type="CTD" id="10625"/>
<dbReference type="DisGeNET" id="10625"/>
<dbReference type="GeneCards" id="IVNS1ABP"/>
<dbReference type="HGNC" id="HGNC:16951">
    <property type="gene designation" value="IVNS1ABP"/>
</dbReference>
<dbReference type="HPA" id="ENSG00000116679">
    <property type="expression patterns" value="Tissue enriched (bone)"/>
</dbReference>
<dbReference type="MalaCards" id="IVNS1ABP"/>
<dbReference type="MIM" id="609209">
    <property type="type" value="gene"/>
</dbReference>
<dbReference type="MIM" id="618969">
    <property type="type" value="phenotype"/>
</dbReference>
<dbReference type="neXtProt" id="NX_Q9Y6Y0"/>
<dbReference type="OpenTargets" id="ENSG00000116679"/>
<dbReference type="PharmGKB" id="PA134875300"/>
<dbReference type="VEuPathDB" id="HostDB:ENSG00000116679"/>
<dbReference type="eggNOG" id="KOG4441">
    <property type="taxonomic scope" value="Eukaryota"/>
</dbReference>
<dbReference type="GeneTree" id="ENSGT00940000155635"/>
<dbReference type="HOGENOM" id="CLU_004253_14_2_1"/>
<dbReference type="InParanoid" id="Q9Y6Y0"/>
<dbReference type="OMA" id="TEIVQDY"/>
<dbReference type="OrthoDB" id="45365at2759"/>
<dbReference type="PAN-GO" id="Q9Y6Y0">
    <property type="GO annotations" value="0 GO annotations based on evolutionary models"/>
</dbReference>
<dbReference type="PhylomeDB" id="Q9Y6Y0"/>
<dbReference type="TreeFam" id="TF329218"/>
<dbReference type="PathwayCommons" id="Q9Y6Y0"/>
<dbReference type="SignaLink" id="Q9Y6Y0"/>
<dbReference type="BioGRID-ORCS" id="10625">
    <property type="hits" value="16 hits in 1203 CRISPR screens"/>
</dbReference>
<dbReference type="CD-CODE" id="804901D1">
    <property type="entry name" value="Nuclear speckle"/>
</dbReference>
<dbReference type="ChiTaRS" id="IVNS1ABP">
    <property type="organism name" value="human"/>
</dbReference>
<dbReference type="GeneWiki" id="IVNS1ABP"/>
<dbReference type="GenomeRNAi" id="10625"/>
<dbReference type="Pharos" id="Q9Y6Y0">
    <property type="development level" value="Tbio"/>
</dbReference>
<dbReference type="PRO" id="PR:Q9Y6Y0"/>
<dbReference type="Proteomes" id="UP000005640">
    <property type="component" value="Chromosome 1"/>
</dbReference>
<dbReference type="RNAct" id="Q9Y6Y0">
    <property type="molecule type" value="protein"/>
</dbReference>
<dbReference type="Bgee" id="ENSG00000116679">
    <property type="expression patterns" value="Expressed in ganglionic eminence and 208 other cell types or tissues"/>
</dbReference>
<dbReference type="ExpressionAtlas" id="Q9Y6Y0">
    <property type="expression patterns" value="baseline and differential"/>
</dbReference>
<dbReference type="GO" id="GO:0031463">
    <property type="term" value="C:Cul3-RING ubiquitin ligase complex"/>
    <property type="evidence" value="ECO:0000318"/>
    <property type="project" value="GO_Central"/>
</dbReference>
<dbReference type="GO" id="GO:0005737">
    <property type="term" value="C:cytoplasm"/>
    <property type="evidence" value="ECO:0000318"/>
    <property type="project" value="GO_Central"/>
</dbReference>
<dbReference type="GO" id="GO:0005856">
    <property type="term" value="C:cytoskeleton"/>
    <property type="evidence" value="ECO:0007669"/>
    <property type="project" value="UniProtKB-SubCell"/>
</dbReference>
<dbReference type="GO" id="GO:0005829">
    <property type="term" value="C:cytosol"/>
    <property type="evidence" value="ECO:0000314"/>
    <property type="project" value="HPA"/>
</dbReference>
<dbReference type="GO" id="GO:0005654">
    <property type="term" value="C:nucleoplasm"/>
    <property type="evidence" value="ECO:0007669"/>
    <property type="project" value="UniProtKB-SubCell"/>
</dbReference>
<dbReference type="GO" id="GO:0005681">
    <property type="term" value="C:spliceosomal complex"/>
    <property type="evidence" value="ECO:0000304"/>
    <property type="project" value="ProtInc"/>
</dbReference>
<dbReference type="GO" id="GO:0005667">
    <property type="term" value="C:transcription regulator complex"/>
    <property type="evidence" value="ECO:0000304"/>
    <property type="project" value="ProtInc"/>
</dbReference>
<dbReference type="GO" id="GO:1990756">
    <property type="term" value="F:ubiquitin-like ligase-substrate adaptor activity"/>
    <property type="evidence" value="ECO:0000318"/>
    <property type="project" value="GO_Central"/>
</dbReference>
<dbReference type="GO" id="GO:0097193">
    <property type="term" value="P:intrinsic apoptotic signaling pathway"/>
    <property type="evidence" value="ECO:0007669"/>
    <property type="project" value="Ensembl"/>
</dbReference>
<dbReference type="GO" id="GO:0006397">
    <property type="term" value="P:mRNA processing"/>
    <property type="evidence" value="ECO:0007669"/>
    <property type="project" value="UniProtKB-KW"/>
</dbReference>
<dbReference type="GO" id="GO:2001243">
    <property type="term" value="P:negative regulation of intrinsic apoptotic signaling pathway"/>
    <property type="evidence" value="ECO:0007669"/>
    <property type="project" value="Ensembl"/>
</dbReference>
<dbReference type="GO" id="GO:0031397">
    <property type="term" value="P:negative regulation of protein ubiquitination"/>
    <property type="evidence" value="ECO:0000315"/>
    <property type="project" value="UniProtKB"/>
</dbReference>
<dbReference type="GO" id="GO:0043161">
    <property type="term" value="P:proteasome-mediated ubiquitin-dependent protein catabolic process"/>
    <property type="evidence" value="ECO:0000318"/>
    <property type="project" value="GO_Central"/>
</dbReference>
<dbReference type="GO" id="GO:0009615">
    <property type="term" value="P:response to virus"/>
    <property type="evidence" value="ECO:0000315"/>
    <property type="project" value="UniProtKB"/>
</dbReference>
<dbReference type="GO" id="GO:0008380">
    <property type="term" value="P:RNA splicing"/>
    <property type="evidence" value="ECO:0000315"/>
    <property type="project" value="UniProtKB"/>
</dbReference>
<dbReference type="GO" id="GO:0006383">
    <property type="term" value="P:transcription by RNA polymerase III"/>
    <property type="evidence" value="ECO:0000304"/>
    <property type="project" value="ProtInc"/>
</dbReference>
<dbReference type="CDD" id="cd18502">
    <property type="entry name" value="BACK_NS1BP_IVNS1ABP"/>
    <property type="match status" value="1"/>
</dbReference>
<dbReference type="CDD" id="cd18306">
    <property type="entry name" value="BTB_POZ_NS1BP"/>
    <property type="match status" value="1"/>
</dbReference>
<dbReference type="FunFam" id="2.120.10.80:FF:000039">
    <property type="entry name" value="influenza virus NS1A-binding protein"/>
    <property type="match status" value="1"/>
</dbReference>
<dbReference type="FunFam" id="1.25.40.420:FF:000017">
    <property type="entry name" value="Influenza virus NS1A-binding protein-like protein"/>
    <property type="match status" value="1"/>
</dbReference>
<dbReference type="FunFam" id="2.120.10.80:FF:000027">
    <property type="entry name" value="Influenza virus NS1A-binding protein-like protein"/>
    <property type="match status" value="1"/>
</dbReference>
<dbReference type="FunFam" id="3.30.710.10:FF:000068">
    <property type="entry name" value="Influenza virus NS1A-binding protein-like protein"/>
    <property type="match status" value="1"/>
</dbReference>
<dbReference type="Gene3D" id="1.25.40.420">
    <property type="match status" value="1"/>
</dbReference>
<dbReference type="Gene3D" id="2.120.10.80">
    <property type="entry name" value="Kelch-type beta propeller"/>
    <property type="match status" value="2"/>
</dbReference>
<dbReference type="Gene3D" id="3.30.710.10">
    <property type="entry name" value="Potassium Channel Kv1.1, Chain A"/>
    <property type="match status" value="1"/>
</dbReference>
<dbReference type="InterPro" id="IPR011705">
    <property type="entry name" value="BACK"/>
</dbReference>
<dbReference type="InterPro" id="IPR017096">
    <property type="entry name" value="BTB-kelch_protein"/>
</dbReference>
<dbReference type="InterPro" id="IPR000210">
    <property type="entry name" value="BTB/POZ_dom"/>
</dbReference>
<dbReference type="InterPro" id="IPR015915">
    <property type="entry name" value="Kelch-typ_b-propeller"/>
</dbReference>
<dbReference type="InterPro" id="IPR006652">
    <property type="entry name" value="Kelch_1"/>
</dbReference>
<dbReference type="InterPro" id="IPR011333">
    <property type="entry name" value="SKP1/BTB/POZ_sf"/>
</dbReference>
<dbReference type="PANTHER" id="PTHR24412:SF396">
    <property type="entry name" value="INFLUENZA VIRUS NS1A-BINDING PROTEIN"/>
    <property type="match status" value="1"/>
</dbReference>
<dbReference type="PANTHER" id="PTHR24412">
    <property type="entry name" value="KELCH PROTEIN"/>
    <property type="match status" value="1"/>
</dbReference>
<dbReference type="Pfam" id="PF07707">
    <property type="entry name" value="BACK"/>
    <property type="match status" value="1"/>
</dbReference>
<dbReference type="Pfam" id="PF00651">
    <property type="entry name" value="BTB"/>
    <property type="match status" value="1"/>
</dbReference>
<dbReference type="Pfam" id="PF01344">
    <property type="entry name" value="Kelch_1"/>
    <property type="match status" value="1"/>
</dbReference>
<dbReference type="Pfam" id="PF24681">
    <property type="entry name" value="Kelch_KLHDC2_KLHL20_DRC7"/>
    <property type="match status" value="1"/>
</dbReference>
<dbReference type="PIRSF" id="PIRSF037037">
    <property type="entry name" value="Kelch-like_protein_gigaxonin"/>
    <property type="match status" value="1"/>
</dbReference>
<dbReference type="PRINTS" id="PR00501">
    <property type="entry name" value="KELCHREPEAT"/>
</dbReference>
<dbReference type="SMART" id="SM00875">
    <property type="entry name" value="BACK"/>
    <property type="match status" value="1"/>
</dbReference>
<dbReference type="SMART" id="SM00225">
    <property type="entry name" value="BTB"/>
    <property type="match status" value="1"/>
</dbReference>
<dbReference type="SMART" id="SM00612">
    <property type="entry name" value="Kelch"/>
    <property type="match status" value="6"/>
</dbReference>
<dbReference type="SUPFAM" id="SSF117281">
    <property type="entry name" value="Kelch motif"/>
    <property type="match status" value="2"/>
</dbReference>
<dbReference type="SUPFAM" id="SSF54695">
    <property type="entry name" value="POZ domain"/>
    <property type="match status" value="1"/>
</dbReference>
<dbReference type="PROSITE" id="PS50097">
    <property type="entry name" value="BTB"/>
    <property type="match status" value="1"/>
</dbReference>
<organism>
    <name type="scientific">Homo sapiens</name>
    <name type="common">Human</name>
    <dbReference type="NCBI Taxonomy" id="9606"/>
    <lineage>
        <taxon>Eukaryota</taxon>
        <taxon>Metazoa</taxon>
        <taxon>Chordata</taxon>
        <taxon>Craniata</taxon>
        <taxon>Vertebrata</taxon>
        <taxon>Euteleostomi</taxon>
        <taxon>Mammalia</taxon>
        <taxon>Eutheria</taxon>
        <taxon>Euarchontoglires</taxon>
        <taxon>Primates</taxon>
        <taxon>Haplorrhini</taxon>
        <taxon>Catarrhini</taxon>
        <taxon>Hominidae</taxon>
        <taxon>Homo</taxon>
    </lineage>
</organism>
<reference key="1">
    <citation type="journal article" date="1998" name="J. Virol.">
        <title>NS1-Binding protein (NS1-BP): a novel human protein that interacts with the influenza A virus nonstructural NS1 protein is relocalized in the nuclei of infected cells.</title>
        <authorList>
            <person name="Wolff T."/>
            <person name="O'Neill R.E."/>
            <person name="Palese P."/>
        </authorList>
    </citation>
    <scope>NUCLEOTIDE SEQUENCE [MRNA]</scope>
    <scope>INTERACTION WITH INFLUENZA A VIRUS NON-STRUCTURAL PROTEIN 1 (MICROBIAL INFECTION)</scope>
    <scope>SUBCELLULAR LOCATION</scope>
</reference>
<reference key="2">
    <citation type="journal article" date="2006" name="Mol. Pharmacol.">
        <title>The aryl hydrocarbon receptor signaling pathway is modified through interactions with a Kelch protein.</title>
        <authorList>
            <person name="Dunham E.E."/>
            <person name="Stevens E.A."/>
            <person name="Glover E."/>
            <person name="Bradfield C.A."/>
        </authorList>
    </citation>
    <scope>NUCLEOTIDE SEQUENCE [MRNA]</scope>
    <scope>FUNCTION</scope>
    <scope>DOMAIN</scope>
    <scope>REGION</scope>
    <scope>MUTAGENESIS OF VAL-198 AND GLU-288</scope>
    <scope>INTERACTION WITH AHR</scope>
</reference>
<reference key="3">
    <citation type="submission" date="1999-11" db="EMBL/GenBank/DDBJ databases">
        <title>A novel gene from endothelium cells stimulated by human plasma LDL -- similar to NS1-binding protein.</title>
        <authorList>
            <person name="Chen B.S."/>
            <person name="Zhang K.M."/>
        </authorList>
    </citation>
    <scope>NUCLEOTIDE SEQUENCE [MRNA]</scope>
</reference>
<reference key="4">
    <citation type="journal article" date="1998" name="DNA Res.">
        <title>Prediction of the coding sequences of unidentified human genes. XII. The complete sequences of 100 new cDNA clones from brain which code for large proteins in vitro.</title>
        <authorList>
            <person name="Nagase T."/>
            <person name="Ishikawa K."/>
            <person name="Suyama M."/>
            <person name="Kikuno R."/>
            <person name="Hirosawa M."/>
            <person name="Miyajima N."/>
            <person name="Tanaka A."/>
            <person name="Kotani H."/>
            <person name="Nomura N."/>
            <person name="Ohara O."/>
        </authorList>
    </citation>
    <scope>NUCLEOTIDE SEQUENCE [LARGE SCALE MRNA]</scope>
    <source>
        <tissue>Brain</tissue>
    </source>
</reference>
<reference key="5">
    <citation type="submission" date="2004-01" db="EMBL/GenBank/DDBJ databases">
        <authorList>
            <person name="Ohara O."/>
            <person name="Suyama M."/>
            <person name="Kikuno R."/>
            <person name="Nagase T."/>
            <person name="Ishikawa K."/>
        </authorList>
    </citation>
    <scope>SEQUENCE REVISION</scope>
</reference>
<reference key="6">
    <citation type="journal article" date="2000" name="Genome Res.">
        <title>Cloning and functional analysis of cDNAs with open reading frames for 300 previously undefined genes expressed in CD34+ hematopoietic stem/progenitor cells.</title>
        <authorList>
            <person name="Zhang Q.-H."/>
            <person name="Ye M."/>
            <person name="Wu X.-Y."/>
            <person name="Ren S.-X."/>
            <person name="Zhao M."/>
            <person name="Zhao C.-J."/>
            <person name="Fu G."/>
            <person name="Shen Y."/>
            <person name="Fan H.-Y."/>
            <person name="Lu G."/>
            <person name="Zhong M."/>
            <person name="Xu X.-R."/>
            <person name="Han Z.-G."/>
            <person name="Zhang J.-W."/>
            <person name="Tao J."/>
            <person name="Huang Q.-H."/>
            <person name="Zhou J."/>
            <person name="Hu G.-X."/>
            <person name="Gu J."/>
            <person name="Chen S.-J."/>
            <person name="Chen Z."/>
        </authorList>
    </citation>
    <scope>NUCLEOTIDE SEQUENCE [LARGE SCALE MRNA]</scope>
    <source>
        <tissue>Blood</tissue>
    </source>
</reference>
<reference key="7">
    <citation type="journal article" date="2004" name="Nat. Genet.">
        <title>Complete sequencing and characterization of 21,243 full-length human cDNAs.</title>
        <authorList>
            <person name="Ota T."/>
            <person name="Suzuki Y."/>
            <person name="Nishikawa T."/>
            <person name="Otsuki T."/>
            <person name="Sugiyama T."/>
            <person name="Irie R."/>
            <person name="Wakamatsu A."/>
            <person name="Hayashi K."/>
            <person name="Sato H."/>
            <person name="Nagai K."/>
            <person name="Kimura K."/>
            <person name="Makita H."/>
            <person name="Sekine M."/>
            <person name="Obayashi M."/>
            <person name="Nishi T."/>
            <person name="Shibahara T."/>
            <person name="Tanaka T."/>
            <person name="Ishii S."/>
            <person name="Yamamoto J."/>
            <person name="Saito K."/>
            <person name="Kawai Y."/>
            <person name="Isono Y."/>
            <person name="Nakamura Y."/>
            <person name="Nagahari K."/>
            <person name="Murakami K."/>
            <person name="Yasuda T."/>
            <person name="Iwayanagi T."/>
            <person name="Wagatsuma M."/>
            <person name="Shiratori A."/>
            <person name="Sudo H."/>
            <person name="Hosoiri T."/>
            <person name="Kaku Y."/>
            <person name="Kodaira H."/>
            <person name="Kondo H."/>
            <person name="Sugawara M."/>
            <person name="Takahashi M."/>
            <person name="Kanda K."/>
            <person name="Yokoi T."/>
            <person name="Furuya T."/>
            <person name="Kikkawa E."/>
            <person name="Omura Y."/>
            <person name="Abe K."/>
            <person name="Kamihara K."/>
            <person name="Katsuta N."/>
            <person name="Sato K."/>
            <person name="Tanikawa M."/>
            <person name="Yamazaki M."/>
            <person name="Ninomiya K."/>
            <person name="Ishibashi T."/>
            <person name="Yamashita H."/>
            <person name="Murakawa K."/>
            <person name="Fujimori K."/>
            <person name="Tanai H."/>
            <person name="Kimata M."/>
            <person name="Watanabe M."/>
            <person name="Hiraoka S."/>
            <person name="Chiba Y."/>
            <person name="Ishida S."/>
            <person name="Ono Y."/>
            <person name="Takiguchi S."/>
            <person name="Watanabe S."/>
            <person name="Yosida M."/>
            <person name="Hotuta T."/>
            <person name="Kusano J."/>
            <person name="Kanehori K."/>
            <person name="Takahashi-Fujii A."/>
            <person name="Hara H."/>
            <person name="Tanase T.-O."/>
            <person name="Nomura Y."/>
            <person name="Togiya S."/>
            <person name="Komai F."/>
            <person name="Hara R."/>
            <person name="Takeuchi K."/>
            <person name="Arita M."/>
            <person name="Imose N."/>
            <person name="Musashino K."/>
            <person name="Yuuki H."/>
            <person name="Oshima A."/>
            <person name="Sasaki N."/>
            <person name="Aotsuka S."/>
            <person name="Yoshikawa Y."/>
            <person name="Matsunawa H."/>
            <person name="Ichihara T."/>
            <person name="Shiohata N."/>
            <person name="Sano S."/>
            <person name="Moriya S."/>
            <person name="Momiyama H."/>
            <person name="Satoh N."/>
            <person name="Takami S."/>
            <person name="Terashima Y."/>
            <person name="Suzuki O."/>
            <person name="Nakagawa S."/>
            <person name="Senoh A."/>
            <person name="Mizoguchi H."/>
            <person name="Goto Y."/>
            <person name="Shimizu F."/>
            <person name="Wakebe H."/>
            <person name="Hishigaki H."/>
            <person name="Watanabe T."/>
            <person name="Sugiyama A."/>
            <person name="Takemoto M."/>
            <person name="Kawakami B."/>
            <person name="Yamazaki M."/>
            <person name="Watanabe K."/>
            <person name="Kumagai A."/>
            <person name="Itakura S."/>
            <person name="Fukuzumi Y."/>
            <person name="Fujimori Y."/>
            <person name="Komiyama M."/>
            <person name="Tashiro H."/>
            <person name="Tanigami A."/>
            <person name="Fujiwara T."/>
            <person name="Ono T."/>
            <person name="Yamada K."/>
            <person name="Fujii Y."/>
            <person name="Ozaki K."/>
            <person name="Hirao M."/>
            <person name="Ohmori Y."/>
            <person name="Kawabata A."/>
            <person name="Hikiji T."/>
            <person name="Kobatake N."/>
            <person name="Inagaki H."/>
            <person name="Ikema Y."/>
            <person name="Okamoto S."/>
            <person name="Okitani R."/>
            <person name="Kawakami T."/>
            <person name="Noguchi S."/>
            <person name="Itoh T."/>
            <person name="Shigeta K."/>
            <person name="Senba T."/>
            <person name="Matsumura K."/>
            <person name="Nakajima Y."/>
            <person name="Mizuno T."/>
            <person name="Morinaga M."/>
            <person name="Sasaki M."/>
            <person name="Togashi T."/>
            <person name="Oyama M."/>
            <person name="Hata H."/>
            <person name="Watanabe M."/>
            <person name="Komatsu T."/>
            <person name="Mizushima-Sugano J."/>
            <person name="Satoh T."/>
            <person name="Shirai Y."/>
            <person name="Takahashi Y."/>
            <person name="Nakagawa K."/>
            <person name="Okumura K."/>
            <person name="Nagase T."/>
            <person name="Nomura N."/>
            <person name="Kikuchi H."/>
            <person name="Masuho Y."/>
            <person name="Yamashita R."/>
            <person name="Nakai K."/>
            <person name="Yada T."/>
            <person name="Nakamura Y."/>
            <person name="Ohara O."/>
            <person name="Isogai T."/>
            <person name="Sugano S."/>
        </authorList>
    </citation>
    <scope>NUCLEOTIDE SEQUENCE [LARGE SCALE MRNA]</scope>
    <source>
        <tissue>Testis</tissue>
    </source>
</reference>
<reference key="8">
    <citation type="journal article" date="2006" name="Nature">
        <title>The DNA sequence and biological annotation of human chromosome 1.</title>
        <authorList>
            <person name="Gregory S.G."/>
            <person name="Barlow K.F."/>
            <person name="McLay K.E."/>
            <person name="Kaul R."/>
            <person name="Swarbreck D."/>
            <person name="Dunham A."/>
            <person name="Scott C.E."/>
            <person name="Howe K.L."/>
            <person name="Woodfine K."/>
            <person name="Spencer C.C.A."/>
            <person name="Jones M.C."/>
            <person name="Gillson C."/>
            <person name="Searle S."/>
            <person name="Zhou Y."/>
            <person name="Kokocinski F."/>
            <person name="McDonald L."/>
            <person name="Evans R."/>
            <person name="Phillips K."/>
            <person name="Atkinson A."/>
            <person name="Cooper R."/>
            <person name="Jones C."/>
            <person name="Hall R.E."/>
            <person name="Andrews T.D."/>
            <person name="Lloyd C."/>
            <person name="Ainscough R."/>
            <person name="Almeida J.P."/>
            <person name="Ambrose K.D."/>
            <person name="Anderson F."/>
            <person name="Andrew R.W."/>
            <person name="Ashwell R.I.S."/>
            <person name="Aubin K."/>
            <person name="Babbage A.K."/>
            <person name="Bagguley C.L."/>
            <person name="Bailey J."/>
            <person name="Beasley H."/>
            <person name="Bethel G."/>
            <person name="Bird C.P."/>
            <person name="Bray-Allen S."/>
            <person name="Brown J.Y."/>
            <person name="Brown A.J."/>
            <person name="Buckley D."/>
            <person name="Burton J."/>
            <person name="Bye J."/>
            <person name="Carder C."/>
            <person name="Chapman J.C."/>
            <person name="Clark S.Y."/>
            <person name="Clarke G."/>
            <person name="Clee C."/>
            <person name="Cobley V."/>
            <person name="Collier R.E."/>
            <person name="Corby N."/>
            <person name="Coville G.J."/>
            <person name="Davies J."/>
            <person name="Deadman R."/>
            <person name="Dunn M."/>
            <person name="Earthrowl M."/>
            <person name="Ellington A.G."/>
            <person name="Errington H."/>
            <person name="Frankish A."/>
            <person name="Frankland J."/>
            <person name="French L."/>
            <person name="Garner P."/>
            <person name="Garnett J."/>
            <person name="Gay L."/>
            <person name="Ghori M.R.J."/>
            <person name="Gibson R."/>
            <person name="Gilby L.M."/>
            <person name="Gillett W."/>
            <person name="Glithero R.J."/>
            <person name="Grafham D.V."/>
            <person name="Griffiths C."/>
            <person name="Griffiths-Jones S."/>
            <person name="Grocock R."/>
            <person name="Hammond S."/>
            <person name="Harrison E.S.I."/>
            <person name="Hart E."/>
            <person name="Haugen E."/>
            <person name="Heath P.D."/>
            <person name="Holmes S."/>
            <person name="Holt K."/>
            <person name="Howden P.J."/>
            <person name="Hunt A.R."/>
            <person name="Hunt S.E."/>
            <person name="Hunter G."/>
            <person name="Isherwood J."/>
            <person name="James R."/>
            <person name="Johnson C."/>
            <person name="Johnson D."/>
            <person name="Joy A."/>
            <person name="Kay M."/>
            <person name="Kershaw J.K."/>
            <person name="Kibukawa M."/>
            <person name="Kimberley A.M."/>
            <person name="King A."/>
            <person name="Knights A.J."/>
            <person name="Lad H."/>
            <person name="Laird G."/>
            <person name="Lawlor S."/>
            <person name="Leongamornlert D.A."/>
            <person name="Lloyd D.M."/>
            <person name="Loveland J."/>
            <person name="Lovell J."/>
            <person name="Lush M.J."/>
            <person name="Lyne R."/>
            <person name="Martin S."/>
            <person name="Mashreghi-Mohammadi M."/>
            <person name="Matthews L."/>
            <person name="Matthews N.S.W."/>
            <person name="McLaren S."/>
            <person name="Milne S."/>
            <person name="Mistry S."/>
            <person name="Moore M.J.F."/>
            <person name="Nickerson T."/>
            <person name="O'Dell C.N."/>
            <person name="Oliver K."/>
            <person name="Palmeiri A."/>
            <person name="Palmer S.A."/>
            <person name="Parker A."/>
            <person name="Patel D."/>
            <person name="Pearce A.V."/>
            <person name="Peck A.I."/>
            <person name="Pelan S."/>
            <person name="Phelps K."/>
            <person name="Phillimore B.J."/>
            <person name="Plumb R."/>
            <person name="Rajan J."/>
            <person name="Raymond C."/>
            <person name="Rouse G."/>
            <person name="Saenphimmachak C."/>
            <person name="Sehra H.K."/>
            <person name="Sheridan E."/>
            <person name="Shownkeen R."/>
            <person name="Sims S."/>
            <person name="Skuce C.D."/>
            <person name="Smith M."/>
            <person name="Steward C."/>
            <person name="Subramanian S."/>
            <person name="Sycamore N."/>
            <person name="Tracey A."/>
            <person name="Tromans A."/>
            <person name="Van Helmond Z."/>
            <person name="Wall M."/>
            <person name="Wallis J.M."/>
            <person name="White S."/>
            <person name="Whitehead S.L."/>
            <person name="Wilkinson J.E."/>
            <person name="Willey D.L."/>
            <person name="Williams H."/>
            <person name="Wilming L."/>
            <person name="Wray P.W."/>
            <person name="Wu Z."/>
            <person name="Coulson A."/>
            <person name="Vaudin M."/>
            <person name="Sulston J.E."/>
            <person name="Durbin R.M."/>
            <person name="Hubbard T."/>
            <person name="Wooster R."/>
            <person name="Dunham I."/>
            <person name="Carter N.P."/>
            <person name="McVean G."/>
            <person name="Ross M.T."/>
            <person name="Harrow J."/>
            <person name="Olson M.V."/>
            <person name="Beck S."/>
            <person name="Rogers J."/>
            <person name="Bentley D.R."/>
        </authorList>
    </citation>
    <scope>NUCLEOTIDE SEQUENCE [LARGE SCALE GENOMIC DNA]</scope>
</reference>
<reference key="9">
    <citation type="submission" date="2005-07" db="EMBL/GenBank/DDBJ databases">
        <authorList>
            <person name="Mural R.J."/>
            <person name="Istrail S."/>
            <person name="Sutton G.G."/>
            <person name="Florea L."/>
            <person name="Halpern A.L."/>
            <person name="Mobarry C.M."/>
            <person name="Lippert R."/>
            <person name="Walenz B."/>
            <person name="Shatkay H."/>
            <person name="Dew I."/>
            <person name="Miller J.R."/>
            <person name="Flanigan M.J."/>
            <person name="Edwards N.J."/>
            <person name="Bolanos R."/>
            <person name="Fasulo D."/>
            <person name="Halldorsson B.V."/>
            <person name="Hannenhalli S."/>
            <person name="Turner R."/>
            <person name="Yooseph S."/>
            <person name="Lu F."/>
            <person name="Nusskern D.R."/>
            <person name="Shue B.C."/>
            <person name="Zheng X.H."/>
            <person name="Zhong F."/>
            <person name="Delcher A.L."/>
            <person name="Huson D.H."/>
            <person name="Kravitz S.A."/>
            <person name="Mouchard L."/>
            <person name="Reinert K."/>
            <person name="Remington K.A."/>
            <person name="Clark A.G."/>
            <person name="Waterman M.S."/>
            <person name="Eichler E.E."/>
            <person name="Adams M.D."/>
            <person name="Hunkapiller M.W."/>
            <person name="Myers E.W."/>
            <person name="Venter J.C."/>
        </authorList>
    </citation>
    <scope>NUCLEOTIDE SEQUENCE [LARGE SCALE GENOMIC DNA]</scope>
</reference>
<reference key="10">
    <citation type="journal article" date="2004" name="Genome Res.">
        <title>The status, quality, and expansion of the NIH full-length cDNA project: the Mammalian Gene Collection (MGC).</title>
        <authorList>
            <consortium name="The MGC Project Team"/>
        </authorList>
    </citation>
    <scope>NUCLEOTIDE SEQUENCE [LARGE SCALE MRNA]</scope>
    <source>
        <tissue>Testis</tissue>
    </source>
</reference>
<reference key="11">
    <citation type="journal article" date="2006" name="Cell">
        <title>Global, in vivo, and site-specific phosphorylation dynamics in signaling networks.</title>
        <authorList>
            <person name="Olsen J.V."/>
            <person name="Blagoev B."/>
            <person name="Gnad F."/>
            <person name="Macek B."/>
            <person name="Kumar C."/>
            <person name="Mortensen P."/>
            <person name="Mann M."/>
        </authorList>
    </citation>
    <scope>IDENTIFICATION BY MASS SPECTROMETRY [LARGE SCALE ANALYSIS]</scope>
    <source>
        <tissue>Cervix carcinoma</tissue>
    </source>
</reference>
<reference key="12">
    <citation type="journal article" date="2006" name="Nat. Biotechnol.">
        <title>A probability-based approach for high-throughput protein phosphorylation analysis and site localization.</title>
        <authorList>
            <person name="Beausoleil S.A."/>
            <person name="Villen J."/>
            <person name="Gerber S.A."/>
            <person name="Rush J."/>
            <person name="Gygi S.P."/>
        </authorList>
    </citation>
    <scope>PHOSPHORYLATION [LARGE SCALE ANALYSIS] AT SER-277 AND SER-322</scope>
    <scope>IDENTIFICATION BY MASS SPECTROMETRY [LARGE SCALE ANALYSIS]</scope>
    <source>
        <tissue>Cervix carcinoma</tissue>
    </source>
</reference>
<reference key="13">
    <citation type="journal article" date="2008" name="Mol. Cell">
        <title>Kinase-selective enrichment enables quantitative phosphoproteomics of the kinome across the cell cycle.</title>
        <authorList>
            <person name="Daub H."/>
            <person name="Olsen J.V."/>
            <person name="Bairlein M."/>
            <person name="Gnad F."/>
            <person name="Oppermann F.S."/>
            <person name="Korner R."/>
            <person name="Greff Z."/>
            <person name="Keri G."/>
            <person name="Stemmann O."/>
            <person name="Mann M."/>
        </authorList>
    </citation>
    <scope>PHOSPHORYLATION [LARGE SCALE ANALYSIS] AT SER-336 AND SER-338</scope>
    <scope>IDENTIFICATION BY MASS SPECTROMETRY [LARGE SCALE ANALYSIS]</scope>
    <source>
        <tissue>Cervix carcinoma</tissue>
    </source>
</reference>
<reference key="14">
    <citation type="journal article" date="2008" name="Proc. Natl. Acad. Sci. U.S.A.">
        <title>A quantitative atlas of mitotic phosphorylation.</title>
        <authorList>
            <person name="Dephoure N."/>
            <person name="Zhou C."/>
            <person name="Villen J."/>
            <person name="Beausoleil S.A."/>
            <person name="Bakalarski C.E."/>
            <person name="Elledge S.J."/>
            <person name="Gygi S.P."/>
        </authorList>
    </citation>
    <scope>PHOSPHORYLATION [LARGE SCALE ANALYSIS] AT SER-338</scope>
    <scope>IDENTIFICATION BY MASS SPECTROMETRY [LARGE SCALE ANALYSIS]</scope>
    <source>
        <tissue>Cervix carcinoma</tissue>
    </source>
</reference>
<reference key="15">
    <citation type="journal article" date="2009" name="Anal. Chem.">
        <title>Lys-N and trypsin cover complementary parts of the phosphoproteome in a refined SCX-based approach.</title>
        <authorList>
            <person name="Gauci S."/>
            <person name="Helbig A.O."/>
            <person name="Slijper M."/>
            <person name="Krijgsveld J."/>
            <person name="Heck A.J."/>
            <person name="Mohammed S."/>
        </authorList>
    </citation>
    <scope>IDENTIFICATION BY MASS SPECTROMETRY [LARGE SCALE ANALYSIS]</scope>
</reference>
<reference key="16">
    <citation type="journal article" date="2009" name="Sci. Signal.">
        <title>Quantitative phosphoproteomic analysis of T cell receptor signaling reveals system-wide modulation of protein-protein interactions.</title>
        <authorList>
            <person name="Mayya V."/>
            <person name="Lundgren D.H."/>
            <person name="Hwang S.-I."/>
            <person name="Rezaul K."/>
            <person name="Wu L."/>
            <person name="Eng J.K."/>
            <person name="Rodionov V."/>
            <person name="Han D.K."/>
        </authorList>
    </citation>
    <scope>PHOSPHORYLATION [LARGE SCALE ANALYSIS] AT SER-246</scope>
    <scope>IDENTIFICATION BY MASS SPECTROMETRY [LARGE SCALE ANALYSIS]</scope>
    <source>
        <tissue>Leukemic T-cell</tissue>
    </source>
</reference>
<reference key="17">
    <citation type="journal article" date="2010" name="Sci. Signal.">
        <title>Quantitative phosphoproteomics reveals widespread full phosphorylation site occupancy during mitosis.</title>
        <authorList>
            <person name="Olsen J.V."/>
            <person name="Vermeulen M."/>
            <person name="Santamaria A."/>
            <person name="Kumar C."/>
            <person name="Miller M.L."/>
            <person name="Jensen L.J."/>
            <person name="Gnad F."/>
            <person name="Cox J."/>
            <person name="Jensen T.S."/>
            <person name="Nigg E.A."/>
            <person name="Brunak S."/>
            <person name="Mann M."/>
        </authorList>
    </citation>
    <scope>IDENTIFICATION BY MASS SPECTROMETRY [LARGE SCALE ANALYSIS]</scope>
    <source>
        <tissue>Cervix carcinoma</tissue>
    </source>
</reference>
<reference key="18">
    <citation type="journal article" date="2011" name="Sci. Signal.">
        <title>System-wide temporal characterization of the proteome and phosphoproteome of human embryonic stem cell differentiation.</title>
        <authorList>
            <person name="Rigbolt K.T."/>
            <person name="Prokhorova T.A."/>
            <person name="Akimov V."/>
            <person name="Henningsen J."/>
            <person name="Johansen P.T."/>
            <person name="Kratchmarova I."/>
            <person name="Kassem M."/>
            <person name="Mann M."/>
            <person name="Olsen J.V."/>
            <person name="Blagoev B."/>
        </authorList>
    </citation>
    <scope>IDENTIFICATION BY MASS SPECTROMETRY [LARGE SCALE ANALYSIS]</scope>
</reference>
<reference key="19">
    <citation type="journal article" date="2013" name="J. Proteome Res.">
        <title>Toward a comprehensive characterization of a human cancer cell phosphoproteome.</title>
        <authorList>
            <person name="Zhou H."/>
            <person name="Di Palma S."/>
            <person name="Preisinger C."/>
            <person name="Peng M."/>
            <person name="Polat A.N."/>
            <person name="Heck A.J."/>
            <person name="Mohammed S."/>
        </authorList>
    </citation>
    <scope>PHOSPHORYLATION [LARGE SCALE ANALYSIS] AT SER-338</scope>
    <scope>IDENTIFICATION BY MASS SPECTROMETRY [LARGE SCALE ANALYSIS]</scope>
    <source>
        <tissue>Erythroleukemia</tissue>
    </source>
</reference>
<reference key="20">
    <citation type="journal article" date="2013" name="PLoS Pathog.">
        <title>Cellular RNA binding proteins NS1-BP and hnRNP K regulate influenza A virus RNA splicing.</title>
        <authorList>
            <person name="Tsai P.L."/>
            <person name="Chiou N.T."/>
            <person name="Kuss S."/>
            <person name="Garcia-Sastre A."/>
            <person name="Lynch K.W."/>
            <person name="Fontoura B.M."/>
        </authorList>
    </citation>
    <scope>INTERACTION WITH HNRNPK</scope>
    <scope>FUNCTION (MICROBIAL INFECTION)</scope>
</reference>
<reference key="21">
    <citation type="journal article" date="2015" name="Oncogene">
        <title>KLHL39 suppresses colon cancer metastasis by blocking KLHL20-mediated PML and DAPK ubiquitination.</title>
        <authorList>
            <person name="Chen H.Y."/>
            <person name="Hu J.Y."/>
            <person name="Chen T.H."/>
            <person name="Lin Y.C."/>
            <person name="Liu X."/>
            <person name="Lin M.Y."/>
            <person name="Lang Y.D."/>
            <person name="Yen Y."/>
            <person name="Chen R.H."/>
        </authorList>
    </citation>
    <scope>INTERACTION WITH KLHL20</scope>
    <scope>FUNCTION</scope>
</reference>
<reference key="22">
    <citation type="journal article" date="2020" name="Nature">
        <title>Whole-genome sequencing of a sporadic primary immunodeficiency cohort.</title>
        <authorList>
            <consortium name="Primary Immunodeficiency Consortium for the NIHR Bioresource"/>
            <person name="Thaventhiran J.E.D."/>
            <person name="Lango Allen H."/>
            <person name="Burren O.S."/>
            <person name="Rae W."/>
            <person name="Greene D."/>
            <person name="Staples E."/>
            <person name="Zhang Z."/>
            <person name="Farmery J.H.R."/>
            <person name="Simeoni I."/>
            <person name="Rivers E."/>
            <person name="Maimaris J."/>
            <person name="Penkett C.J."/>
            <person name="Stephens J."/>
            <person name="Deevi S.V.V."/>
            <person name="Sanchis-Juan A."/>
            <person name="Gleadall N.S."/>
            <person name="Thomas M.J."/>
            <person name="Sargur R.B."/>
            <person name="Gordins P."/>
            <person name="Baxendale H.E."/>
            <person name="Brown M."/>
            <person name="Tuijnenburg P."/>
            <person name="Worth A."/>
            <person name="Hanson S."/>
            <person name="Linger R.J."/>
            <person name="Buckland M.S."/>
            <person name="Rayner-Matthews P.J."/>
            <person name="Gilmour K.C."/>
            <person name="Samarghitean C."/>
            <person name="Seneviratne S.L."/>
            <person name="Sansom D.M."/>
            <person name="Lynch A.G."/>
            <person name="Megy K."/>
            <person name="Ellinghaus E."/>
            <person name="Ellinghaus D."/>
            <person name="Jorgensen S.F."/>
            <person name="Karlsen T.H."/>
            <person name="Stirrups K.E."/>
            <person name="Cutler A.J."/>
            <person name="Kumararatne D.S."/>
            <person name="Chandra A."/>
            <person name="Edgar J.D.M."/>
            <person name="Herwadkar A."/>
            <person name="Cooper N."/>
            <person name="Grigoriadou S."/>
            <person name="Huissoon A.P."/>
            <person name="Goddard S."/>
            <person name="Jolles S."/>
            <person name="Schuetz C."/>
            <person name="Boschann F."/>
            <person name="Lyons P.A."/>
            <person name="Hurles M.E."/>
            <person name="Savic S."/>
            <person name="Burns S.O."/>
            <person name="Kuijpers T.W."/>
            <person name="Turro E."/>
            <person name="Ouwehand W.H."/>
            <person name="Thrasher A.J."/>
            <person name="Smith K.G.C."/>
        </authorList>
    </citation>
    <scope>INVOLVEMENT IN IMD70</scope>
    <scope>VARIANTS IMD70 358-ARG--PHE-642 DEL AND 633-TRP--PHE-642 DEL</scope>
    <scope>CHARACTERIZATION OF VARIANTS IMD70 358-ARG--PHE-642 DEL AND 633-TRP--PHE-642 DEL</scope>
</reference>
<reference evidence="15" key="23">
    <citation type="journal article" date="2018" name="Acta Crystallogr. F">
        <title>Crystal structure of the Kelch domain of human NS1-binding protein at 1.98A resolution.</title>
        <authorList>
            <person name="Guo L."/>
            <person name="Liu Y."/>
        </authorList>
    </citation>
    <scope>X-RAY CRYSTALLOGRAPHY (1.98 ANGSTROMS) OF 330-642</scope>
</reference>
<reference evidence="16 17" key="24">
    <citation type="journal article" date="2018" name="Proc. Natl. Acad. Sci. U.S.A.">
        <title>Structural-functional interactions of NS1-BP protein with the splicing and mRNA export machineries for viral and host gene expression.</title>
        <authorList>
            <person name="Zhang K."/>
            <person name="Shang G."/>
            <person name="Padavannil A."/>
            <person name="Wang J."/>
            <person name="Sakthivel R."/>
            <person name="Chen X."/>
            <person name="Kim M."/>
            <person name="Thompson M.G."/>
            <person name="Garcia-Sastre A."/>
            <person name="Lynch K.W."/>
            <person name="Chen Z.J."/>
            <person name="Chook Y.M."/>
            <person name="Fontoura B.M.A."/>
        </authorList>
    </citation>
    <scope>X-RAY CRYSTALLOGRAPHY (2.60 ANGSTROMS) OF 1-137 AND 321-642</scope>
    <scope>FUNCTION (MICROBIAL INFECTION)</scope>
    <scope>SUBUNIT</scope>
    <scope>INTERACTION WITH HNRNPK; PTBP1; POLR2A; SNRPA; SART1 AND ALYREF</scope>
    <scope>DOMAIN</scope>
    <scope>MUTAGENESIS OF 1-MET--GLU-12 AND 235-ASN--PHE-642</scope>
</reference>
<keyword id="KW-0002">3D-structure</keyword>
<keyword id="KW-0963">Cytoplasm</keyword>
<keyword id="KW-0206">Cytoskeleton</keyword>
<keyword id="KW-0945">Host-virus interaction</keyword>
<keyword id="KW-0880">Kelch repeat</keyword>
<keyword id="KW-0507">mRNA processing</keyword>
<keyword id="KW-0508">mRNA splicing</keyword>
<keyword id="KW-0539">Nucleus</keyword>
<keyword id="KW-0597">Phosphoprotein</keyword>
<keyword id="KW-1267">Proteomics identification</keyword>
<keyword id="KW-1185">Reference proteome</keyword>
<keyword id="KW-0677">Repeat</keyword>
<feature type="chain" id="PRO_0000285077" description="Influenza virus NS1A-binding protein">
    <location>
        <begin position="1"/>
        <end position="642"/>
    </location>
</feature>
<feature type="domain" description="BTB" evidence="11 16">
    <location>
        <begin position="1"/>
        <end position="131"/>
    </location>
</feature>
<feature type="domain" description="BACK" evidence="11">
    <location>
        <begin position="132"/>
        <end position="350"/>
    </location>
</feature>
<feature type="repeat" description="Kelch 1" evidence="11 17">
    <location>
        <begin position="384"/>
        <end position="421"/>
    </location>
</feature>
<feature type="repeat" description="Kelch 2" evidence="11 17">
    <location>
        <begin position="432"/>
        <end position="469"/>
    </location>
</feature>
<feature type="repeat" description="Kelch 3" evidence="11 17">
    <location>
        <begin position="481"/>
        <end position="518"/>
    </location>
</feature>
<feature type="repeat" description="Kelch 4" evidence="11 17">
    <location>
        <begin position="527"/>
        <end position="565"/>
    </location>
</feature>
<feature type="repeat" description="Kelch 5" evidence="11 17">
    <location>
        <begin position="575"/>
        <end position="612"/>
    </location>
</feature>
<feature type="repeat" description="Kelch 6" evidence="11 17">
    <location>
        <begin position="622"/>
        <end position="642"/>
    </location>
</feature>
<feature type="region of interest" description="Sufficient for AHR interaction and signaling">
    <location>
        <begin position="164"/>
        <end position="368"/>
    </location>
</feature>
<feature type="region of interest" description="Disordered" evidence="2">
    <location>
        <begin position="257"/>
        <end position="281"/>
    </location>
</feature>
<feature type="compositionally biased region" description="Polar residues" evidence="2">
    <location>
        <begin position="265"/>
        <end position="281"/>
    </location>
</feature>
<feature type="modified residue" description="Phosphoserine" evidence="21">
    <location>
        <position position="246"/>
    </location>
</feature>
<feature type="modified residue" description="Phosphoserine" evidence="18">
    <location>
        <position position="277"/>
    </location>
</feature>
<feature type="modified residue" description="Phosphoserine" evidence="18">
    <location>
        <position position="322"/>
    </location>
</feature>
<feature type="modified residue" description="Phosphoserine" evidence="20">
    <location>
        <position position="336"/>
    </location>
</feature>
<feature type="modified residue" description="Phosphoserine" evidence="19 20 22">
    <location>
        <position position="338"/>
    </location>
</feature>
<feature type="sequence variant" id="VAR_084531" description="In IMD70; uncertain significance; strong decrease in protein expression." evidence="7">
    <location>
        <begin position="358"/>
        <end position="642"/>
    </location>
</feature>
<feature type="sequence variant" id="VAR_084532" description="In IMD70; uncertain significance; strong decrease in protein expression." evidence="7">
    <location>
        <begin position="633"/>
        <end position="642"/>
    </location>
</feature>
<feature type="mutagenesis site" description="Destabilises dimer and impairs splicing of viral M1 mRNA." evidence="6">
    <location>
        <begin position="1"/>
        <end position="12"/>
    </location>
</feature>
<feature type="mutagenesis site" description="Significant inhibition of interaction with AHR; partial decrease of AHR signaling induced by IVNS1ABP." evidence="3">
    <original>V</original>
    <variation>M</variation>
    <location>
        <position position="198"/>
    </location>
</feature>
<feature type="mutagenesis site" description="Significant inhibition of interaction with AHR; partial decrease of AHR signaling induced by IVNS1ABP." evidence="3">
    <original>E</original>
    <variation>K</variation>
    <location>
        <position position="288"/>
    </location>
</feature>
<feature type="sequence conflict" description="In Ref. 1; CAA10029." evidence="13" ref="1">
    <original>K</original>
    <variation>E</variation>
    <location>
        <position position="111"/>
    </location>
</feature>
<feature type="sequence conflict" description="In Ref. 1; CAA10029." evidence="13" ref="1">
    <original>R</original>
    <variation>H</variation>
    <location>
        <position position="148"/>
    </location>
</feature>
<feature type="sequence conflict" description="In Ref. 10; AAH67739." evidence="13" ref="10">
    <original>E</original>
    <variation>G</variation>
    <location>
        <position position="218"/>
    </location>
</feature>
<feature type="sequence conflict" description="In Ref. 2; ABE03889/ABE03890." evidence="13" ref="2">
    <original>Y</original>
    <variation>H</variation>
    <location>
        <position position="579"/>
    </location>
</feature>
<feature type="sequence conflict" description="In Ref. 1; CAA10029." evidence="13" ref="1">
    <original>N</original>
    <variation>H</variation>
    <location>
        <position position="591"/>
    </location>
</feature>
<feature type="sequence conflict" description="In Ref. 1; CAA10029." evidence="13" ref="1">
    <original>V</original>
    <variation>A</variation>
    <location>
        <position position="623"/>
    </location>
</feature>
<feature type="strand" evidence="24">
    <location>
        <begin position="7"/>
        <end position="10"/>
    </location>
</feature>
<feature type="helix" evidence="24">
    <location>
        <begin position="12"/>
        <end position="27"/>
    </location>
</feature>
<feature type="strand" evidence="24">
    <location>
        <begin position="34"/>
        <end position="38"/>
    </location>
</feature>
<feature type="strand" evidence="24">
    <location>
        <begin position="41"/>
        <end position="45"/>
    </location>
</feature>
<feature type="helix" evidence="24">
    <location>
        <begin position="47"/>
        <end position="51"/>
    </location>
</feature>
<feature type="helix" evidence="24">
    <location>
        <begin position="55"/>
        <end position="60"/>
    </location>
</feature>
<feature type="strand" evidence="24">
    <location>
        <begin position="71"/>
        <end position="74"/>
    </location>
</feature>
<feature type="strand" evidence="24">
    <location>
        <begin position="76"/>
        <end position="78"/>
    </location>
</feature>
<feature type="helix" evidence="24">
    <location>
        <begin position="80"/>
        <end position="92"/>
    </location>
</feature>
<feature type="strand" evidence="24">
    <location>
        <begin position="93"/>
        <end position="97"/>
    </location>
</feature>
<feature type="helix" evidence="24">
    <location>
        <begin position="99"/>
        <end position="101"/>
    </location>
</feature>
<feature type="helix" evidence="24">
    <location>
        <begin position="102"/>
        <end position="111"/>
    </location>
</feature>
<feature type="helix" evidence="24">
    <location>
        <begin position="115"/>
        <end position="126"/>
    </location>
</feature>
<feature type="strand" evidence="23">
    <location>
        <begin position="362"/>
        <end position="366"/>
    </location>
</feature>
<feature type="strand" evidence="23">
    <location>
        <begin position="369"/>
        <end position="373"/>
    </location>
</feature>
<feature type="strand" evidence="23">
    <location>
        <begin position="385"/>
        <end position="388"/>
    </location>
</feature>
<feature type="turn" evidence="23">
    <location>
        <begin position="390"/>
        <end position="392"/>
    </location>
</feature>
<feature type="strand" evidence="23">
    <location>
        <begin position="395"/>
        <end position="398"/>
    </location>
</feature>
<feature type="strand" evidence="23">
    <location>
        <begin position="409"/>
        <end position="413"/>
    </location>
</feature>
<feature type="strand" evidence="23">
    <location>
        <begin position="416"/>
        <end position="421"/>
    </location>
</feature>
<feature type="strand" evidence="25">
    <location>
        <begin position="425"/>
        <end position="427"/>
    </location>
</feature>
<feature type="strand" evidence="23">
    <location>
        <begin position="428"/>
        <end position="431"/>
    </location>
</feature>
<feature type="strand" evidence="23">
    <location>
        <begin position="433"/>
        <end position="437"/>
    </location>
</feature>
<feature type="turn" evidence="23">
    <location>
        <begin position="438"/>
        <end position="441"/>
    </location>
</feature>
<feature type="strand" evidence="23">
    <location>
        <begin position="442"/>
        <end position="446"/>
    </location>
</feature>
<feature type="helix" evidence="23">
    <location>
        <begin position="447"/>
        <end position="449"/>
    </location>
</feature>
<feature type="strand" evidence="23">
    <location>
        <begin position="457"/>
        <end position="461"/>
    </location>
</feature>
<feature type="strand" evidence="23">
    <location>
        <begin position="464"/>
        <end position="468"/>
    </location>
</feature>
<feature type="strand" evidence="23">
    <location>
        <begin position="482"/>
        <end position="486"/>
    </location>
</feature>
<feature type="turn" evidence="23">
    <location>
        <begin position="487"/>
        <end position="490"/>
    </location>
</feature>
<feature type="strand" evidence="23">
    <location>
        <begin position="491"/>
        <end position="494"/>
    </location>
</feature>
<feature type="strand" evidence="23">
    <location>
        <begin position="502"/>
        <end position="504"/>
    </location>
</feature>
<feature type="strand" evidence="23">
    <location>
        <begin position="506"/>
        <end position="510"/>
    </location>
</feature>
<feature type="strand" evidence="23">
    <location>
        <begin position="513"/>
        <end position="533"/>
    </location>
</feature>
<feature type="turn" evidence="23">
    <location>
        <begin position="534"/>
        <end position="537"/>
    </location>
</feature>
<feature type="strand" evidence="23">
    <location>
        <begin position="538"/>
        <end position="541"/>
    </location>
</feature>
<feature type="strand" evidence="23">
    <location>
        <begin position="553"/>
        <end position="557"/>
    </location>
</feature>
<feature type="strand" evidence="23">
    <location>
        <begin position="560"/>
        <end position="564"/>
    </location>
</feature>
<feature type="strand" evidence="23">
    <location>
        <begin position="569"/>
        <end position="572"/>
    </location>
</feature>
<feature type="strand" evidence="23">
    <location>
        <begin position="576"/>
        <end position="580"/>
    </location>
</feature>
<feature type="turn" evidence="23">
    <location>
        <begin position="581"/>
        <end position="584"/>
    </location>
</feature>
<feature type="strand" evidence="23">
    <location>
        <begin position="585"/>
        <end position="588"/>
    </location>
</feature>
<feature type="strand" evidence="23">
    <location>
        <begin position="600"/>
        <end position="604"/>
    </location>
</feature>
<feature type="strand" evidence="23">
    <location>
        <begin position="607"/>
        <end position="611"/>
    </location>
</feature>
<feature type="strand" evidence="23">
    <location>
        <begin position="616"/>
        <end position="619"/>
    </location>
</feature>
<feature type="strand" evidence="23">
    <location>
        <begin position="623"/>
        <end position="627"/>
    </location>
</feature>
<feature type="turn" evidence="23">
    <location>
        <begin position="628"/>
        <end position="631"/>
    </location>
</feature>
<feature type="strand" evidence="23">
    <location>
        <begin position="632"/>
        <end position="636"/>
    </location>
</feature>